<comment type="cofactor">
    <cofactor evidence="1">
        <name>Zn(2+)</name>
        <dbReference type="ChEBI" id="CHEBI:29105"/>
    </cofactor>
    <text evidence="1">Binds 1 zinc ion per subunit.</text>
</comment>
<comment type="subcellular location">
    <subcellularLocation>
        <location evidence="1">Cell inner membrane</location>
        <topology evidence="1">Multi-pass membrane protein</topology>
    </subcellularLocation>
</comment>
<comment type="similarity">
    <text evidence="1">Belongs to the peptidase M48B family.</text>
</comment>
<sequence>MKRILLFVLTNLAVVLVLGVVASLLGVNHYLTGNGLNLGALLGFALVMGFGGAFISLLISKPMAKWSAGVRVIDGSGSPDERWIVETVRKLASQAGIGMPEVGIFDGAPNAFATGAFKNSALVAVSTGLLQGMTREEVEAVIGHEVAHIANGDMVTMTLIQGVMNTFVVFLSRVIGYAVDSALRKNNDSQTGPGMGYYVTTIVLDIALGFVAAIIVAWFSRQREFRADAGAARLMGRRQPMIAALARLGGMQPAQLPKSMAALGIAGGIGQWFSTHPPLEARIAALQNAHQD</sequence>
<proteinExistence type="inferred from homology"/>
<gene>
    <name evidence="1" type="primary">htpX</name>
    <name type="ordered locus">Veis_1214</name>
</gene>
<protein>
    <recommendedName>
        <fullName evidence="1">Protease HtpX homolog</fullName>
        <ecNumber evidence="1">3.4.24.-</ecNumber>
    </recommendedName>
</protein>
<accession>A1WH77</accession>
<reference key="1">
    <citation type="submission" date="2006-12" db="EMBL/GenBank/DDBJ databases">
        <title>Complete sequence of chromosome 1 of Verminephrobacter eiseniae EF01-2.</title>
        <authorList>
            <person name="Copeland A."/>
            <person name="Lucas S."/>
            <person name="Lapidus A."/>
            <person name="Barry K."/>
            <person name="Detter J.C."/>
            <person name="Glavina del Rio T."/>
            <person name="Dalin E."/>
            <person name="Tice H."/>
            <person name="Pitluck S."/>
            <person name="Chertkov O."/>
            <person name="Brettin T."/>
            <person name="Bruce D."/>
            <person name="Han C."/>
            <person name="Tapia R."/>
            <person name="Gilna P."/>
            <person name="Schmutz J."/>
            <person name="Larimer F."/>
            <person name="Land M."/>
            <person name="Hauser L."/>
            <person name="Kyrpides N."/>
            <person name="Kim E."/>
            <person name="Stahl D."/>
            <person name="Richardson P."/>
        </authorList>
    </citation>
    <scope>NUCLEOTIDE SEQUENCE [LARGE SCALE GENOMIC DNA]</scope>
    <source>
        <strain>EF01-2</strain>
    </source>
</reference>
<evidence type="ECO:0000255" key="1">
    <source>
        <dbReference type="HAMAP-Rule" id="MF_00188"/>
    </source>
</evidence>
<name>HTPX_VEREI</name>
<feature type="chain" id="PRO_1000020965" description="Protease HtpX homolog">
    <location>
        <begin position="1"/>
        <end position="292"/>
    </location>
</feature>
<feature type="transmembrane region" description="Helical" evidence="1">
    <location>
        <begin position="4"/>
        <end position="24"/>
    </location>
</feature>
<feature type="transmembrane region" description="Helical" evidence="1">
    <location>
        <begin position="39"/>
        <end position="59"/>
    </location>
</feature>
<feature type="transmembrane region" description="Helical" evidence="1">
    <location>
        <begin position="159"/>
        <end position="179"/>
    </location>
</feature>
<feature type="transmembrane region" description="Helical" evidence="1">
    <location>
        <begin position="199"/>
        <end position="219"/>
    </location>
</feature>
<feature type="active site" evidence="1">
    <location>
        <position position="145"/>
    </location>
</feature>
<feature type="binding site" evidence="1">
    <location>
        <position position="144"/>
    </location>
    <ligand>
        <name>Zn(2+)</name>
        <dbReference type="ChEBI" id="CHEBI:29105"/>
        <note>catalytic</note>
    </ligand>
</feature>
<feature type="binding site" evidence="1">
    <location>
        <position position="148"/>
    </location>
    <ligand>
        <name>Zn(2+)</name>
        <dbReference type="ChEBI" id="CHEBI:29105"/>
        <note>catalytic</note>
    </ligand>
</feature>
<feature type="binding site" evidence="1">
    <location>
        <position position="224"/>
    </location>
    <ligand>
        <name>Zn(2+)</name>
        <dbReference type="ChEBI" id="CHEBI:29105"/>
        <note>catalytic</note>
    </ligand>
</feature>
<organism>
    <name type="scientific">Verminephrobacter eiseniae (strain EF01-2)</name>
    <dbReference type="NCBI Taxonomy" id="391735"/>
    <lineage>
        <taxon>Bacteria</taxon>
        <taxon>Pseudomonadati</taxon>
        <taxon>Pseudomonadota</taxon>
        <taxon>Betaproteobacteria</taxon>
        <taxon>Burkholderiales</taxon>
        <taxon>Comamonadaceae</taxon>
        <taxon>Verminephrobacter</taxon>
    </lineage>
</organism>
<keyword id="KW-0997">Cell inner membrane</keyword>
<keyword id="KW-1003">Cell membrane</keyword>
<keyword id="KW-0378">Hydrolase</keyword>
<keyword id="KW-0472">Membrane</keyword>
<keyword id="KW-0479">Metal-binding</keyword>
<keyword id="KW-0482">Metalloprotease</keyword>
<keyword id="KW-0645">Protease</keyword>
<keyword id="KW-1185">Reference proteome</keyword>
<keyword id="KW-0812">Transmembrane</keyword>
<keyword id="KW-1133">Transmembrane helix</keyword>
<keyword id="KW-0862">Zinc</keyword>
<dbReference type="EC" id="3.4.24.-" evidence="1"/>
<dbReference type="EMBL" id="CP000542">
    <property type="protein sequence ID" value="ABM56984.1"/>
    <property type="molecule type" value="Genomic_DNA"/>
</dbReference>
<dbReference type="RefSeq" id="WP_011808995.1">
    <property type="nucleotide sequence ID" value="NC_008786.1"/>
</dbReference>
<dbReference type="SMR" id="A1WH77"/>
<dbReference type="STRING" id="391735.Veis_1214"/>
<dbReference type="MEROPS" id="M48.002"/>
<dbReference type="GeneID" id="76459865"/>
<dbReference type="KEGG" id="vei:Veis_1214"/>
<dbReference type="eggNOG" id="COG0501">
    <property type="taxonomic scope" value="Bacteria"/>
</dbReference>
<dbReference type="HOGENOM" id="CLU_042266_1_0_4"/>
<dbReference type="OrthoDB" id="15218at2"/>
<dbReference type="Proteomes" id="UP000000374">
    <property type="component" value="Chromosome"/>
</dbReference>
<dbReference type="GO" id="GO:0005886">
    <property type="term" value="C:plasma membrane"/>
    <property type="evidence" value="ECO:0007669"/>
    <property type="project" value="UniProtKB-SubCell"/>
</dbReference>
<dbReference type="GO" id="GO:0004222">
    <property type="term" value="F:metalloendopeptidase activity"/>
    <property type="evidence" value="ECO:0007669"/>
    <property type="project" value="UniProtKB-UniRule"/>
</dbReference>
<dbReference type="GO" id="GO:0008270">
    <property type="term" value="F:zinc ion binding"/>
    <property type="evidence" value="ECO:0007669"/>
    <property type="project" value="UniProtKB-UniRule"/>
</dbReference>
<dbReference type="GO" id="GO:0006508">
    <property type="term" value="P:proteolysis"/>
    <property type="evidence" value="ECO:0007669"/>
    <property type="project" value="UniProtKB-KW"/>
</dbReference>
<dbReference type="CDD" id="cd07335">
    <property type="entry name" value="M48B_HtpX_like"/>
    <property type="match status" value="1"/>
</dbReference>
<dbReference type="Gene3D" id="3.30.2010.10">
    <property type="entry name" value="Metalloproteases ('zincins'), catalytic domain"/>
    <property type="match status" value="1"/>
</dbReference>
<dbReference type="HAMAP" id="MF_00188">
    <property type="entry name" value="Pept_M48_protease_HtpX"/>
    <property type="match status" value="1"/>
</dbReference>
<dbReference type="InterPro" id="IPR050083">
    <property type="entry name" value="HtpX_protease"/>
</dbReference>
<dbReference type="InterPro" id="IPR022919">
    <property type="entry name" value="Pept_M48_protease_HtpX"/>
</dbReference>
<dbReference type="InterPro" id="IPR001915">
    <property type="entry name" value="Peptidase_M48"/>
</dbReference>
<dbReference type="NCBIfam" id="NF003965">
    <property type="entry name" value="PRK05457.1"/>
    <property type="match status" value="1"/>
</dbReference>
<dbReference type="PANTHER" id="PTHR43221">
    <property type="entry name" value="PROTEASE HTPX"/>
    <property type="match status" value="1"/>
</dbReference>
<dbReference type="PANTHER" id="PTHR43221:SF1">
    <property type="entry name" value="PROTEASE HTPX"/>
    <property type="match status" value="1"/>
</dbReference>
<dbReference type="Pfam" id="PF01435">
    <property type="entry name" value="Peptidase_M48"/>
    <property type="match status" value="1"/>
</dbReference>